<keyword id="KW-0963">Cytoplasm</keyword>
<keyword id="KW-0324">Glycolysis</keyword>
<keyword id="KW-0520">NAD</keyword>
<keyword id="KW-0560">Oxidoreductase</keyword>
<evidence type="ECO:0000250" key="1"/>
<evidence type="ECO:0000255" key="2">
    <source>
        <dbReference type="PROSITE-ProRule" id="PRU10009"/>
    </source>
</evidence>
<evidence type="ECO:0000305" key="3"/>
<organism>
    <name type="scientific">Schizophyllum commune</name>
    <name type="common">Split gill fungus</name>
    <dbReference type="NCBI Taxonomy" id="5334"/>
    <lineage>
        <taxon>Eukaryota</taxon>
        <taxon>Fungi</taxon>
        <taxon>Dikarya</taxon>
        <taxon>Basidiomycota</taxon>
        <taxon>Agaricomycotina</taxon>
        <taxon>Agaricomycetes</taxon>
        <taxon>Agaricomycetidae</taxon>
        <taxon>Agaricales</taxon>
        <taxon>Schizophyllaceae</taxon>
        <taxon>Schizophyllum</taxon>
    </lineage>
</organism>
<protein>
    <recommendedName>
        <fullName>Glyceraldehyde-3-phosphate dehydrogenase</fullName>
        <shortName>GAPDH</shortName>
        <ecNumber>1.2.1.12</ecNumber>
    </recommendedName>
</protein>
<feature type="chain" id="PRO_0000145579" description="Glyceraldehyde-3-phosphate dehydrogenase">
    <location>
        <begin position="1"/>
        <end position="337"/>
    </location>
</feature>
<feature type="active site" description="Nucleophile" evidence="2">
    <location>
        <position position="151"/>
    </location>
</feature>
<feature type="binding site" evidence="1">
    <location>
        <begin position="12"/>
        <end position="13"/>
    </location>
    <ligand>
        <name>NAD(+)</name>
        <dbReference type="ChEBI" id="CHEBI:57540"/>
    </ligand>
</feature>
<feature type="binding site" evidence="1">
    <location>
        <position position="34"/>
    </location>
    <ligand>
        <name>NAD(+)</name>
        <dbReference type="ChEBI" id="CHEBI:57540"/>
    </ligand>
</feature>
<feature type="binding site" evidence="1">
    <location>
        <position position="79"/>
    </location>
    <ligand>
        <name>NAD(+)</name>
        <dbReference type="ChEBI" id="CHEBI:57540"/>
    </ligand>
</feature>
<feature type="binding site" evidence="1">
    <location>
        <begin position="150"/>
        <end position="152"/>
    </location>
    <ligand>
        <name>D-glyceraldehyde 3-phosphate</name>
        <dbReference type="ChEBI" id="CHEBI:59776"/>
    </ligand>
</feature>
<feature type="binding site" evidence="1">
    <location>
        <position position="181"/>
    </location>
    <ligand>
        <name>D-glyceraldehyde 3-phosphate</name>
        <dbReference type="ChEBI" id="CHEBI:59776"/>
    </ligand>
</feature>
<feature type="binding site" evidence="1">
    <location>
        <begin position="210"/>
        <end position="211"/>
    </location>
    <ligand>
        <name>D-glyceraldehyde 3-phosphate</name>
        <dbReference type="ChEBI" id="CHEBI:59776"/>
    </ligand>
</feature>
<feature type="binding site" evidence="1">
    <location>
        <position position="233"/>
    </location>
    <ligand>
        <name>D-glyceraldehyde 3-phosphate</name>
        <dbReference type="ChEBI" id="CHEBI:59776"/>
    </ligand>
</feature>
<feature type="binding site" evidence="1">
    <location>
        <position position="315"/>
    </location>
    <ligand>
        <name>NAD(+)</name>
        <dbReference type="ChEBI" id="CHEBI:57540"/>
    </ligand>
</feature>
<feature type="site" description="Activates thiol group during catalysis" evidence="1">
    <location>
        <position position="178"/>
    </location>
</feature>
<name>G3P_SCHCO</name>
<dbReference type="EC" id="1.2.1.12"/>
<dbReference type="EMBL" id="M81724">
    <property type="protein sequence ID" value="AAA33926.1"/>
    <property type="molecule type" value="Genomic_DNA"/>
</dbReference>
<dbReference type="PIR" id="S26973">
    <property type="entry name" value="S26973"/>
</dbReference>
<dbReference type="SMR" id="P32638"/>
<dbReference type="VEuPathDB" id="FungiDB:SCHCODRAFT_02638699"/>
<dbReference type="OMA" id="YGYTCNM"/>
<dbReference type="UniPathway" id="UPA00109">
    <property type="reaction ID" value="UER00184"/>
</dbReference>
<dbReference type="GO" id="GO:0005829">
    <property type="term" value="C:cytosol"/>
    <property type="evidence" value="ECO:0007669"/>
    <property type="project" value="TreeGrafter"/>
</dbReference>
<dbReference type="GO" id="GO:0004365">
    <property type="term" value="F:glyceraldehyde-3-phosphate dehydrogenase (NAD+) (phosphorylating) activity"/>
    <property type="evidence" value="ECO:0007669"/>
    <property type="project" value="UniProtKB-EC"/>
</dbReference>
<dbReference type="GO" id="GO:0051287">
    <property type="term" value="F:NAD binding"/>
    <property type="evidence" value="ECO:0007669"/>
    <property type="project" value="InterPro"/>
</dbReference>
<dbReference type="GO" id="GO:0050661">
    <property type="term" value="F:NADP binding"/>
    <property type="evidence" value="ECO:0007669"/>
    <property type="project" value="InterPro"/>
</dbReference>
<dbReference type="GO" id="GO:0006006">
    <property type="term" value="P:glucose metabolic process"/>
    <property type="evidence" value="ECO:0007669"/>
    <property type="project" value="InterPro"/>
</dbReference>
<dbReference type="GO" id="GO:0006096">
    <property type="term" value="P:glycolytic process"/>
    <property type="evidence" value="ECO:0007669"/>
    <property type="project" value="UniProtKB-UniPathway"/>
</dbReference>
<dbReference type="CDD" id="cd18126">
    <property type="entry name" value="GAPDH_I_C"/>
    <property type="match status" value="1"/>
</dbReference>
<dbReference type="CDD" id="cd05214">
    <property type="entry name" value="GAPDH_I_N"/>
    <property type="match status" value="1"/>
</dbReference>
<dbReference type="FunFam" id="3.30.360.10:FF:000001">
    <property type="entry name" value="Glyceraldehyde-3-phosphate dehydrogenase"/>
    <property type="match status" value="1"/>
</dbReference>
<dbReference type="FunFam" id="3.40.50.720:FF:000266">
    <property type="entry name" value="Glyceraldehyde-3-phosphate dehydrogenase"/>
    <property type="match status" value="1"/>
</dbReference>
<dbReference type="Gene3D" id="3.30.360.10">
    <property type="entry name" value="Dihydrodipicolinate Reductase, domain 2"/>
    <property type="match status" value="1"/>
</dbReference>
<dbReference type="Gene3D" id="3.40.50.720">
    <property type="entry name" value="NAD(P)-binding Rossmann-like Domain"/>
    <property type="match status" value="1"/>
</dbReference>
<dbReference type="InterPro" id="IPR020831">
    <property type="entry name" value="GlycerAld/Erythrose_P_DH"/>
</dbReference>
<dbReference type="InterPro" id="IPR020830">
    <property type="entry name" value="GlycerAld_3-P_DH_AS"/>
</dbReference>
<dbReference type="InterPro" id="IPR020829">
    <property type="entry name" value="GlycerAld_3-P_DH_cat"/>
</dbReference>
<dbReference type="InterPro" id="IPR020828">
    <property type="entry name" value="GlycerAld_3-P_DH_NAD(P)-bd"/>
</dbReference>
<dbReference type="InterPro" id="IPR006424">
    <property type="entry name" value="Glyceraldehyde-3-P_DH_1"/>
</dbReference>
<dbReference type="InterPro" id="IPR036291">
    <property type="entry name" value="NAD(P)-bd_dom_sf"/>
</dbReference>
<dbReference type="NCBIfam" id="TIGR01534">
    <property type="entry name" value="GAPDH-I"/>
    <property type="match status" value="1"/>
</dbReference>
<dbReference type="PANTHER" id="PTHR10836">
    <property type="entry name" value="GLYCERALDEHYDE 3-PHOSPHATE DEHYDROGENASE"/>
    <property type="match status" value="1"/>
</dbReference>
<dbReference type="PANTHER" id="PTHR10836:SF76">
    <property type="entry name" value="GLYCERALDEHYDE-3-PHOSPHATE DEHYDROGENASE-RELATED"/>
    <property type="match status" value="1"/>
</dbReference>
<dbReference type="Pfam" id="PF02800">
    <property type="entry name" value="Gp_dh_C"/>
    <property type="match status" value="1"/>
</dbReference>
<dbReference type="Pfam" id="PF00044">
    <property type="entry name" value="Gp_dh_N"/>
    <property type="match status" value="1"/>
</dbReference>
<dbReference type="PIRSF" id="PIRSF000149">
    <property type="entry name" value="GAP_DH"/>
    <property type="match status" value="1"/>
</dbReference>
<dbReference type="PRINTS" id="PR00078">
    <property type="entry name" value="G3PDHDRGNASE"/>
</dbReference>
<dbReference type="SMART" id="SM00846">
    <property type="entry name" value="Gp_dh_N"/>
    <property type="match status" value="1"/>
</dbReference>
<dbReference type="SUPFAM" id="SSF55347">
    <property type="entry name" value="Glyceraldehyde-3-phosphate dehydrogenase-like, C-terminal domain"/>
    <property type="match status" value="1"/>
</dbReference>
<dbReference type="SUPFAM" id="SSF51735">
    <property type="entry name" value="NAD(P)-binding Rossmann-fold domains"/>
    <property type="match status" value="1"/>
</dbReference>
<dbReference type="PROSITE" id="PS00071">
    <property type="entry name" value="GAPDH"/>
    <property type="match status" value="1"/>
</dbReference>
<reference key="1">
    <citation type="journal article" date="1992" name="Curr. Genet.">
        <title>Sequence analysis of the glyceraldehyde-3-phosphate dehydrogenase genes from the basidiomycetes Schizophyllum commune, Phanerochaete chrysosporium and Agaricus bisporus.</title>
        <authorList>
            <person name="Harmsen M.C."/>
            <person name="Schuren F.H.J."/>
            <person name="Moukha S.M."/>
            <person name="van Zuilen C.M."/>
            <person name="Punt P.J."/>
            <person name="Wessels J.G.H."/>
        </authorList>
    </citation>
    <scope>NUCLEOTIDE SEQUENCE [GENOMIC DNA]</scope>
</reference>
<accession>P32638</accession>
<comment type="catalytic activity">
    <reaction evidence="2">
        <text>D-glyceraldehyde 3-phosphate + phosphate + NAD(+) = (2R)-3-phospho-glyceroyl phosphate + NADH + H(+)</text>
        <dbReference type="Rhea" id="RHEA:10300"/>
        <dbReference type="ChEBI" id="CHEBI:15378"/>
        <dbReference type="ChEBI" id="CHEBI:43474"/>
        <dbReference type="ChEBI" id="CHEBI:57540"/>
        <dbReference type="ChEBI" id="CHEBI:57604"/>
        <dbReference type="ChEBI" id="CHEBI:57945"/>
        <dbReference type="ChEBI" id="CHEBI:59776"/>
        <dbReference type="EC" id="1.2.1.12"/>
    </reaction>
</comment>
<comment type="pathway">
    <text>Carbohydrate degradation; glycolysis; pyruvate from D-glyceraldehyde 3-phosphate: step 1/5.</text>
</comment>
<comment type="subunit">
    <text>Homotetramer.</text>
</comment>
<comment type="subcellular location">
    <subcellularLocation>
        <location>Cytoplasm</location>
    </subcellularLocation>
</comment>
<comment type="similarity">
    <text evidence="3">Belongs to the glyceraldehyde-3-phosphate dehydrogenase family.</text>
</comment>
<proteinExistence type="inferred from homology"/>
<gene>
    <name type="primary">GPD</name>
</gene>
<sequence>MAVKVGINGFGRIGRIVLRNALQLGNIEVVAINDPFIALDYMVYMFKYDTVHGRYKGTVEVKDGKLVVDGHAITVFAEKNPADIKWGSAGADYIVESTGVFTTVEKASLHLQGGAKKVVISAPSADAPMFVVGVNLDKYDSKYQVISNASCTTNCLAPLAKVIHDKYGIAEGLMTTVHATTATQKTVDGPSHKDWRGGRSVNNNIIPSSTGAAKAVGKVIPSLNGRLTGLAFRVPTLDVSVVDLVVRLEKEASYDEIVATVKEASEGPLKGILGFTDESVVSTDFTGANESSIFDSKAGIAISKSFVKLIAWYDNEWGYSRRVCDLLVYAAKQDGAL</sequence>